<dbReference type="EMBL" id="AY280963">
    <property type="protein sequence ID" value="AAP32311.1"/>
    <property type="molecule type" value="mRNA"/>
</dbReference>
<dbReference type="EMBL" id="AJ564264">
    <property type="protein sequence ID" value="CAD91927.1"/>
    <property type="molecule type" value="mRNA"/>
</dbReference>
<dbReference type="EMBL" id="AL929221">
    <property type="status" value="NOT_ANNOTATED_CDS"/>
    <property type="molecule type" value="Genomic_DNA"/>
</dbReference>
<dbReference type="EMBL" id="BC069942">
    <property type="protein sequence ID" value="AAH69942.1"/>
    <property type="molecule type" value="mRNA"/>
</dbReference>
<dbReference type="EMBL" id="AK052926">
    <property type="protein sequence ID" value="BAC35204.1"/>
    <property type="molecule type" value="mRNA"/>
</dbReference>
<dbReference type="CCDS" id="CCDS16087.1"/>
<dbReference type="RefSeq" id="NP_853525.3">
    <property type="nucleotide sequence ID" value="NM_181547.3"/>
</dbReference>
<dbReference type="SMR" id="Q6WKZ7"/>
<dbReference type="BioGRID" id="236762">
    <property type="interactions" value="4"/>
</dbReference>
<dbReference type="FunCoup" id="Q6WKZ7">
    <property type="interactions" value="873"/>
</dbReference>
<dbReference type="IntAct" id="Q6WKZ7">
    <property type="interactions" value="3"/>
</dbReference>
<dbReference type="MINT" id="Q6WKZ7"/>
<dbReference type="STRING" id="10090.ENSMUSP00000036923"/>
<dbReference type="iPTMnet" id="Q6WKZ7"/>
<dbReference type="PhosphoSitePlus" id="Q6WKZ7"/>
<dbReference type="PaxDb" id="10090-ENSMUSP00000036923"/>
<dbReference type="PeptideAtlas" id="Q6WKZ7"/>
<dbReference type="ProteomicsDB" id="293942"/>
<dbReference type="Antibodypedia" id="47609">
    <property type="antibodies" value="195 antibodies from 27 providers"/>
</dbReference>
<dbReference type="DNASU" id="329416"/>
<dbReference type="Ensembl" id="ENSMUST00000041865.8">
    <property type="protein sequence ID" value="ENSMUSP00000036923.8"/>
    <property type="gene ID" value="ENSMUSG00000034738.9"/>
</dbReference>
<dbReference type="GeneID" id="329416"/>
<dbReference type="KEGG" id="mmu:329416"/>
<dbReference type="UCSC" id="uc008jxt.2">
    <property type="organism name" value="mouse"/>
</dbReference>
<dbReference type="AGR" id="MGI:3606242"/>
<dbReference type="CTD" id="115677"/>
<dbReference type="MGI" id="MGI:3606242">
    <property type="gene designation" value="Nostrin"/>
</dbReference>
<dbReference type="VEuPathDB" id="HostDB:ENSMUSG00000034738"/>
<dbReference type="eggNOG" id="KOG4429">
    <property type="taxonomic scope" value="Eukaryota"/>
</dbReference>
<dbReference type="GeneTree" id="ENSGT00510000048120"/>
<dbReference type="HOGENOM" id="CLU_027170_1_0_1"/>
<dbReference type="InParanoid" id="Q6WKZ7"/>
<dbReference type="OMA" id="HRLARFQ"/>
<dbReference type="OrthoDB" id="28357at2759"/>
<dbReference type="PhylomeDB" id="Q6WKZ7"/>
<dbReference type="TreeFam" id="TF318059"/>
<dbReference type="Reactome" id="R-MMU-203641">
    <property type="pathway name" value="NOSTRIN mediated eNOS trafficking"/>
</dbReference>
<dbReference type="BioGRID-ORCS" id="329416">
    <property type="hits" value="1 hit in 78 CRISPR screens"/>
</dbReference>
<dbReference type="PRO" id="PR:Q6WKZ7"/>
<dbReference type="Proteomes" id="UP000000589">
    <property type="component" value="Chromosome 2"/>
</dbReference>
<dbReference type="RNAct" id="Q6WKZ7">
    <property type="molecule type" value="protein"/>
</dbReference>
<dbReference type="Bgee" id="ENSMUSG00000034738">
    <property type="expression patterns" value="Expressed in interventricular septum and 104 other cell types or tissues"/>
</dbReference>
<dbReference type="GO" id="GO:0031410">
    <property type="term" value="C:cytoplasmic vesicle"/>
    <property type="evidence" value="ECO:0007669"/>
    <property type="project" value="UniProtKB-KW"/>
</dbReference>
<dbReference type="GO" id="GO:0005856">
    <property type="term" value="C:cytoskeleton"/>
    <property type="evidence" value="ECO:0007669"/>
    <property type="project" value="UniProtKB-SubCell"/>
</dbReference>
<dbReference type="GO" id="GO:0005634">
    <property type="term" value="C:nucleus"/>
    <property type="evidence" value="ECO:0000314"/>
    <property type="project" value="MGI"/>
</dbReference>
<dbReference type="GO" id="GO:0005886">
    <property type="term" value="C:plasma membrane"/>
    <property type="evidence" value="ECO:0007669"/>
    <property type="project" value="UniProtKB-SubCell"/>
</dbReference>
<dbReference type="GO" id="GO:0003677">
    <property type="term" value="F:DNA binding"/>
    <property type="evidence" value="ECO:0000314"/>
    <property type="project" value="MGI"/>
</dbReference>
<dbReference type="GO" id="GO:0006897">
    <property type="term" value="P:endocytosis"/>
    <property type="evidence" value="ECO:0007669"/>
    <property type="project" value="UniProtKB-KW"/>
</dbReference>
<dbReference type="GO" id="GO:0045892">
    <property type="term" value="P:negative regulation of DNA-templated transcription"/>
    <property type="evidence" value="ECO:0000314"/>
    <property type="project" value="MGI"/>
</dbReference>
<dbReference type="GO" id="GO:0007165">
    <property type="term" value="P:signal transduction"/>
    <property type="evidence" value="ECO:0007669"/>
    <property type="project" value="InterPro"/>
</dbReference>
<dbReference type="CDD" id="cd07658">
    <property type="entry name" value="F-BAR_NOSTRIN"/>
    <property type="match status" value="1"/>
</dbReference>
<dbReference type="CDD" id="cd11823">
    <property type="entry name" value="SH3_Nostrin"/>
    <property type="match status" value="1"/>
</dbReference>
<dbReference type="FunFam" id="2.30.30.40:FF:000186">
    <property type="entry name" value="Nitric oxide synthase trafficking"/>
    <property type="match status" value="1"/>
</dbReference>
<dbReference type="FunFam" id="1.20.1270.60:FF:000067">
    <property type="entry name" value="NOSTRIN isoform 1"/>
    <property type="match status" value="1"/>
</dbReference>
<dbReference type="Gene3D" id="6.10.140.470">
    <property type="match status" value="1"/>
</dbReference>
<dbReference type="Gene3D" id="1.20.1270.60">
    <property type="entry name" value="Arfaptin homology (AH) domain/BAR domain"/>
    <property type="match status" value="1"/>
</dbReference>
<dbReference type="Gene3D" id="2.30.30.40">
    <property type="entry name" value="SH3 Domains"/>
    <property type="match status" value="1"/>
</dbReference>
<dbReference type="InterPro" id="IPR027267">
    <property type="entry name" value="AH/BAR_dom_sf"/>
</dbReference>
<dbReference type="InterPro" id="IPR031160">
    <property type="entry name" value="F_BAR"/>
</dbReference>
<dbReference type="InterPro" id="IPR001060">
    <property type="entry name" value="FCH_dom"/>
</dbReference>
<dbReference type="InterPro" id="IPR011072">
    <property type="entry name" value="HR1_rho-bd"/>
</dbReference>
<dbReference type="InterPro" id="IPR035656">
    <property type="entry name" value="Nostrin_SH3"/>
</dbReference>
<dbReference type="InterPro" id="IPR036028">
    <property type="entry name" value="SH3-like_dom_sf"/>
</dbReference>
<dbReference type="InterPro" id="IPR001452">
    <property type="entry name" value="SH3_domain"/>
</dbReference>
<dbReference type="PANTHER" id="PTHR23065:SF7">
    <property type="entry name" value="NOSTRIN, ISOFORM H"/>
    <property type="match status" value="1"/>
</dbReference>
<dbReference type="PANTHER" id="PTHR23065">
    <property type="entry name" value="PROLINE-SERINE-THREONINE PHOSPHATASE INTERACTING PROTEIN 1"/>
    <property type="match status" value="1"/>
</dbReference>
<dbReference type="Pfam" id="PF00611">
    <property type="entry name" value="FCH"/>
    <property type="match status" value="1"/>
</dbReference>
<dbReference type="Pfam" id="PF14604">
    <property type="entry name" value="SH3_9"/>
    <property type="match status" value="1"/>
</dbReference>
<dbReference type="PRINTS" id="PR00452">
    <property type="entry name" value="SH3DOMAIN"/>
</dbReference>
<dbReference type="PRINTS" id="PR01887">
    <property type="entry name" value="SPECTRNALPHA"/>
</dbReference>
<dbReference type="SMART" id="SM00326">
    <property type="entry name" value="SH3"/>
    <property type="match status" value="1"/>
</dbReference>
<dbReference type="SUPFAM" id="SSF103657">
    <property type="entry name" value="BAR/IMD domain-like"/>
    <property type="match status" value="1"/>
</dbReference>
<dbReference type="SUPFAM" id="SSF50044">
    <property type="entry name" value="SH3-domain"/>
    <property type="match status" value="1"/>
</dbReference>
<dbReference type="PROSITE" id="PS51741">
    <property type="entry name" value="F_BAR"/>
    <property type="match status" value="1"/>
</dbReference>
<dbReference type="PROSITE" id="PS51860">
    <property type="entry name" value="REM_1"/>
    <property type="match status" value="1"/>
</dbReference>
<dbReference type="PROSITE" id="PS50002">
    <property type="entry name" value="SH3"/>
    <property type="match status" value="1"/>
</dbReference>
<organism>
    <name type="scientific">Mus musculus</name>
    <name type="common">Mouse</name>
    <dbReference type="NCBI Taxonomy" id="10090"/>
    <lineage>
        <taxon>Eukaryota</taxon>
        <taxon>Metazoa</taxon>
        <taxon>Chordata</taxon>
        <taxon>Craniata</taxon>
        <taxon>Vertebrata</taxon>
        <taxon>Euteleostomi</taxon>
        <taxon>Mammalia</taxon>
        <taxon>Eutheria</taxon>
        <taxon>Euarchontoglires</taxon>
        <taxon>Glires</taxon>
        <taxon>Rodentia</taxon>
        <taxon>Myomorpha</taxon>
        <taxon>Muroidea</taxon>
        <taxon>Muridae</taxon>
        <taxon>Murinae</taxon>
        <taxon>Mus</taxon>
        <taxon>Mus</taxon>
    </lineage>
</organism>
<gene>
    <name evidence="12" type="primary">Nostrin</name>
    <name type="synonym">Daip2</name>
</gene>
<reference key="1">
    <citation type="journal article" date="2005" name="Biochem. Biophys. Res. Commun.">
        <title>Cloning and characterization of mouse disabled 2-interacting protein 2, a mouse orthologue of human NOSTRIN.</title>
        <authorList>
            <person name="Choi Y.-J."/>
            <person name="Cho S.-Y."/>
            <person name="Kim H.-W."/>
            <person name="Kim J.-A."/>
            <person name="Bae S.-H."/>
            <person name="Park S.-S."/>
        </authorList>
    </citation>
    <scope>NUCLEOTIDE SEQUENCE [MRNA]</scope>
    <scope>INDUCTION BY RETINOIC ACID</scope>
    <scope>INTERACTION WITH DAB2</scope>
    <scope>SUBCELLULAR LOCATION</scope>
    <source>
        <tissue>Teratocarcinoma</tissue>
    </source>
</reference>
<reference key="2">
    <citation type="submission" date="2003-05" db="EMBL/GenBank/DDBJ databases">
        <title>Characterization of NOSTRIN - a novel eNOS binding protein.</title>
        <authorList>
            <person name="Opitz N."/>
        </authorList>
    </citation>
    <scope>NUCLEOTIDE SEQUENCE [MRNA]</scope>
    <source>
        <strain>BALB/cJ</strain>
        <tissue>Heart</tissue>
    </source>
</reference>
<reference key="3">
    <citation type="journal article" date="2009" name="PLoS Biol.">
        <title>Lineage-specific biology revealed by a finished genome assembly of the mouse.</title>
        <authorList>
            <person name="Church D.M."/>
            <person name="Goodstadt L."/>
            <person name="Hillier L.W."/>
            <person name="Zody M.C."/>
            <person name="Goldstein S."/>
            <person name="She X."/>
            <person name="Bult C.J."/>
            <person name="Agarwala R."/>
            <person name="Cherry J.L."/>
            <person name="DiCuccio M."/>
            <person name="Hlavina W."/>
            <person name="Kapustin Y."/>
            <person name="Meric P."/>
            <person name="Maglott D."/>
            <person name="Birtle Z."/>
            <person name="Marques A.C."/>
            <person name="Graves T."/>
            <person name="Zhou S."/>
            <person name="Teague B."/>
            <person name="Potamousis K."/>
            <person name="Churas C."/>
            <person name="Place M."/>
            <person name="Herschleb J."/>
            <person name="Runnheim R."/>
            <person name="Forrest D."/>
            <person name="Amos-Landgraf J."/>
            <person name="Schwartz D.C."/>
            <person name="Cheng Z."/>
            <person name="Lindblad-Toh K."/>
            <person name="Eichler E.E."/>
            <person name="Ponting C.P."/>
        </authorList>
    </citation>
    <scope>NUCLEOTIDE SEQUENCE [LARGE SCALE GENOMIC DNA]</scope>
    <source>
        <strain>C57BL/6J</strain>
    </source>
</reference>
<reference key="4">
    <citation type="journal article" date="2004" name="Genome Res.">
        <title>The status, quality, and expansion of the NIH full-length cDNA project: the Mammalian Gene Collection (MGC).</title>
        <authorList>
            <consortium name="The MGC Project Team"/>
        </authorList>
    </citation>
    <scope>NUCLEOTIDE SEQUENCE [LARGE SCALE MRNA]</scope>
    <source>
        <strain>C57BL/6J</strain>
        <tissue>Embryo</tissue>
    </source>
</reference>
<reference key="5">
    <citation type="journal article" date="2005" name="Science">
        <title>The transcriptional landscape of the mammalian genome.</title>
        <authorList>
            <person name="Carninci P."/>
            <person name="Kasukawa T."/>
            <person name="Katayama S."/>
            <person name="Gough J."/>
            <person name="Frith M.C."/>
            <person name="Maeda N."/>
            <person name="Oyama R."/>
            <person name="Ravasi T."/>
            <person name="Lenhard B."/>
            <person name="Wells C."/>
            <person name="Kodzius R."/>
            <person name="Shimokawa K."/>
            <person name="Bajic V.B."/>
            <person name="Brenner S.E."/>
            <person name="Batalov S."/>
            <person name="Forrest A.R."/>
            <person name="Zavolan M."/>
            <person name="Davis M.J."/>
            <person name="Wilming L.G."/>
            <person name="Aidinis V."/>
            <person name="Allen J.E."/>
            <person name="Ambesi-Impiombato A."/>
            <person name="Apweiler R."/>
            <person name="Aturaliya R.N."/>
            <person name="Bailey T.L."/>
            <person name="Bansal M."/>
            <person name="Baxter L."/>
            <person name="Beisel K.W."/>
            <person name="Bersano T."/>
            <person name="Bono H."/>
            <person name="Chalk A.M."/>
            <person name="Chiu K.P."/>
            <person name="Choudhary V."/>
            <person name="Christoffels A."/>
            <person name="Clutterbuck D.R."/>
            <person name="Crowe M.L."/>
            <person name="Dalla E."/>
            <person name="Dalrymple B.P."/>
            <person name="de Bono B."/>
            <person name="Della Gatta G."/>
            <person name="di Bernardo D."/>
            <person name="Down T."/>
            <person name="Engstrom P."/>
            <person name="Fagiolini M."/>
            <person name="Faulkner G."/>
            <person name="Fletcher C.F."/>
            <person name="Fukushima T."/>
            <person name="Furuno M."/>
            <person name="Futaki S."/>
            <person name="Gariboldi M."/>
            <person name="Georgii-Hemming P."/>
            <person name="Gingeras T.R."/>
            <person name="Gojobori T."/>
            <person name="Green R.E."/>
            <person name="Gustincich S."/>
            <person name="Harbers M."/>
            <person name="Hayashi Y."/>
            <person name="Hensch T.K."/>
            <person name="Hirokawa N."/>
            <person name="Hill D."/>
            <person name="Huminiecki L."/>
            <person name="Iacono M."/>
            <person name="Ikeo K."/>
            <person name="Iwama A."/>
            <person name="Ishikawa T."/>
            <person name="Jakt M."/>
            <person name="Kanapin A."/>
            <person name="Katoh M."/>
            <person name="Kawasawa Y."/>
            <person name="Kelso J."/>
            <person name="Kitamura H."/>
            <person name="Kitano H."/>
            <person name="Kollias G."/>
            <person name="Krishnan S.P."/>
            <person name="Kruger A."/>
            <person name="Kummerfeld S.K."/>
            <person name="Kurochkin I.V."/>
            <person name="Lareau L.F."/>
            <person name="Lazarevic D."/>
            <person name="Lipovich L."/>
            <person name="Liu J."/>
            <person name="Liuni S."/>
            <person name="McWilliam S."/>
            <person name="Madan Babu M."/>
            <person name="Madera M."/>
            <person name="Marchionni L."/>
            <person name="Matsuda H."/>
            <person name="Matsuzawa S."/>
            <person name="Miki H."/>
            <person name="Mignone F."/>
            <person name="Miyake S."/>
            <person name="Morris K."/>
            <person name="Mottagui-Tabar S."/>
            <person name="Mulder N."/>
            <person name="Nakano N."/>
            <person name="Nakauchi H."/>
            <person name="Ng P."/>
            <person name="Nilsson R."/>
            <person name="Nishiguchi S."/>
            <person name="Nishikawa S."/>
            <person name="Nori F."/>
            <person name="Ohara O."/>
            <person name="Okazaki Y."/>
            <person name="Orlando V."/>
            <person name="Pang K.C."/>
            <person name="Pavan W.J."/>
            <person name="Pavesi G."/>
            <person name="Pesole G."/>
            <person name="Petrovsky N."/>
            <person name="Piazza S."/>
            <person name="Reed J."/>
            <person name="Reid J.F."/>
            <person name="Ring B.Z."/>
            <person name="Ringwald M."/>
            <person name="Rost B."/>
            <person name="Ruan Y."/>
            <person name="Salzberg S.L."/>
            <person name="Sandelin A."/>
            <person name="Schneider C."/>
            <person name="Schoenbach C."/>
            <person name="Sekiguchi K."/>
            <person name="Semple C.A."/>
            <person name="Seno S."/>
            <person name="Sessa L."/>
            <person name="Sheng Y."/>
            <person name="Shibata Y."/>
            <person name="Shimada H."/>
            <person name="Shimada K."/>
            <person name="Silva D."/>
            <person name="Sinclair B."/>
            <person name="Sperling S."/>
            <person name="Stupka E."/>
            <person name="Sugiura K."/>
            <person name="Sultana R."/>
            <person name="Takenaka Y."/>
            <person name="Taki K."/>
            <person name="Tammoja K."/>
            <person name="Tan S.L."/>
            <person name="Tang S."/>
            <person name="Taylor M.S."/>
            <person name="Tegner J."/>
            <person name="Teichmann S.A."/>
            <person name="Ueda H.R."/>
            <person name="van Nimwegen E."/>
            <person name="Verardo R."/>
            <person name="Wei C.L."/>
            <person name="Yagi K."/>
            <person name="Yamanishi H."/>
            <person name="Zabarovsky E."/>
            <person name="Zhu S."/>
            <person name="Zimmer A."/>
            <person name="Hide W."/>
            <person name="Bult C."/>
            <person name="Grimmond S.M."/>
            <person name="Teasdale R.D."/>
            <person name="Liu E.T."/>
            <person name="Brusic V."/>
            <person name="Quackenbush J."/>
            <person name="Wahlestedt C."/>
            <person name="Mattick J.S."/>
            <person name="Hume D.A."/>
            <person name="Kai C."/>
            <person name="Sasaki D."/>
            <person name="Tomaru Y."/>
            <person name="Fukuda S."/>
            <person name="Kanamori-Katayama M."/>
            <person name="Suzuki M."/>
            <person name="Aoki J."/>
            <person name="Arakawa T."/>
            <person name="Iida J."/>
            <person name="Imamura K."/>
            <person name="Itoh M."/>
            <person name="Kato T."/>
            <person name="Kawaji H."/>
            <person name="Kawagashira N."/>
            <person name="Kawashima T."/>
            <person name="Kojima M."/>
            <person name="Kondo S."/>
            <person name="Konno H."/>
            <person name="Nakano K."/>
            <person name="Ninomiya N."/>
            <person name="Nishio T."/>
            <person name="Okada M."/>
            <person name="Plessy C."/>
            <person name="Shibata K."/>
            <person name="Shiraki T."/>
            <person name="Suzuki S."/>
            <person name="Tagami M."/>
            <person name="Waki K."/>
            <person name="Watahiki A."/>
            <person name="Okamura-Oho Y."/>
            <person name="Suzuki H."/>
            <person name="Kawai J."/>
            <person name="Hayashizaki Y."/>
        </authorList>
    </citation>
    <scope>NUCLEOTIDE SEQUENCE [LARGE SCALE MRNA] OF 1-177</scope>
    <source>
        <strain>C57BL/6J</strain>
        <tissue>Heart</tissue>
    </source>
</reference>
<reference key="6">
    <citation type="journal article" date="2005" name="Biochem. Biophys. Res. Commun.">
        <title>Mouse disabled 2-interacting protein 2 functions as a transcriptional repressor through direct binding onto its own promoter.</title>
        <authorList>
            <person name="Kim H.-W."/>
            <person name="Choi Y.-J."/>
            <person name="Kim J.-A."/>
            <person name="Bae S.-H."/>
            <person name="Kim K.-R."/>
            <person name="Park S.-S."/>
        </authorList>
    </citation>
    <scope>FUNCTION</scope>
</reference>
<reference key="7">
    <citation type="journal article" date="2007" name="Proc. Natl. Acad. Sci. U.S.A.">
        <title>Large-scale phosphorylation analysis of mouse liver.</title>
        <authorList>
            <person name="Villen J."/>
            <person name="Beausoleil S.A."/>
            <person name="Gerber S.A."/>
            <person name="Gygi S.P."/>
        </authorList>
    </citation>
    <scope>PHOSPHORYLATION [LARGE SCALE ANALYSIS] AT SER-479</scope>
    <scope>IDENTIFICATION BY MASS SPECTROMETRY [LARGE SCALE ANALYSIS]</scope>
    <source>
        <tissue>Liver</tissue>
    </source>
</reference>
<reference key="8">
    <citation type="journal article" date="2009" name="Immunity">
        <title>The phagosomal proteome in interferon-gamma-activated macrophages.</title>
        <authorList>
            <person name="Trost M."/>
            <person name="English L."/>
            <person name="Lemieux S."/>
            <person name="Courcelles M."/>
            <person name="Desjardins M."/>
            <person name="Thibault P."/>
        </authorList>
    </citation>
    <scope>PHOSPHORYLATION [LARGE SCALE ANALYSIS] AT SER-479</scope>
    <scope>IDENTIFICATION BY MASS SPECTROMETRY [LARGE SCALE ANALYSIS]</scope>
</reference>
<reference key="9">
    <citation type="journal article" date="2010" name="Cell">
        <title>A tissue-specific atlas of mouse protein phosphorylation and expression.</title>
        <authorList>
            <person name="Huttlin E.L."/>
            <person name="Jedrychowski M.P."/>
            <person name="Elias J.E."/>
            <person name="Goswami T."/>
            <person name="Rad R."/>
            <person name="Beausoleil S.A."/>
            <person name="Villen J."/>
            <person name="Haas W."/>
            <person name="Sowa M.E."/>
            <person name="Gygi S.P."/>
        </authorList>
    </citation>
    <scope>PHOSPHORYLATION [LARGE SCALE ANALYSIS] AT SER-479</scope>
    <scope>IDENTIFICATION BY MASS SPECTROMETRY [LARGE SCALE ANALYSIS]</scope>
    <source>
        <tissue>Brain</tissue>
        <tissue>Heart</tissue>
        <tissue>Kidney</tissue>
        <tissue>Liver</tissue>
        <tissue>Lung</tissue>
        <tissue>Spleen</tissue>
    </source>
</reference>
<feature type="chain" id="PRO_0000289090" description="Nostrin">
    <location>
        <begin position="1"/>
        <end position="506"/>
    </location>
</feature>
<feature type="domain" description="F-BAR" evidence="6">
    <location>
        <begin position="1"/>
        <end position="260"/>
    </location>
</feature>
<feature type="domain" description="REM-1" evidence="7">
    <location>
        <begin position="292"/>
        <end position="372"/>
    </location>
</feature>
<feature type="domain" description="SH3" evidence="5">
    <location>
        <begin position="438"/>
        <end position="497"/>
    </location>
</feature>
<feature type="region of interest" description="Disordered" evidence="8">
    <location>
        <begin position="413"/>
        <end position="435"/>
    </location>
</feature>
<feature type="coiled-coil region" evidence="4">
    <location>
        <begin position="160"/>
        <end position="230"/>
    </location>
</feature>
<feature type="coiled-coil region" evidence="4">
    <location>
        <begin position="305"/>
        <end position="334"/>
    </location>
</feature>
<feature type="compositionally biased region" description="Low complexity" evidence="8">
    <location>
        <begin position="419"/>
        <end position="435"/>
    </location>
</feature>
<feature type="modified residue" description="Phosphoserine" evidence="2">
    <location>
        <position position="114"/>
    </location>
</feature>
<feature type="modified residue" description="Phosphoserine" evidence="13 14 15">
    <location>
        <position position="479"/>
    </location>
</feature>
<feature type="sequence conflict" description="In Ref. 1; AAP32311." evidence="11" ref="1">
    <original>Q</original>
    <variation>R</variation>
    <location>
        <position position="50"/>
    </location>
</feature>
<comment type="function">
    <text evidence="1 10">Multivalent adapter protein which may decrease NOS3 activity by inducing its translocation away from the plasma membrane.</text>
</comment>
<comment type="subunit">
    <text evidence="1 2 9">Homotrimer. Interacts with NOS3, DNM2, WASL and CAV1 (By similarity). Interacts with DAB2. Interacts (via SH3 domain) with DNM2; this interaction allows the recruitment of NOS3 to dynamin-positive structures (By similarity).</text>
</comment>
<comment type="interaction">
    <interactant intactId="EBI-1391878">
        <id>Q6WKZ7</id>
    </interactant>
    <interactant intactId="EBI-1391846">
        <id>P98078</id>
        <label>Dab2</label>
    </interactant>
    <organismsDiffer>false</organismsDiffer>
    <experiments>2</experiments>
</comment>
<comment type="subcellular location">
    <subcellularLocation>
        <location evidence="3">Cell membrane</location>
        <topology evidence="3">Peripheral membrane protein</topology>
        <orientation evidence="3">Cytoplasmic side</orientation>
    </subcellularLocation>
    <subcellularLocation>
        <location evidence="3">Cytoplasmic vesicle</location>
    </subcellularLocation>
    <subcellularLocation>
        <location evidence="3">Cytoplasm</location>
        <location evidence="3">Cytoskeleton</location>
    </subcellularLocation>
    <subcellularLocation>
        <location evidence="9">Cytoplasm</location>
    </subcellularLocation>
    <subcellularLocation>
        <location evidence="9">Nucleus</location>
    </subcellularLocation>
    <text evidence="3">Enriched in selected actin structures.</text>
</comment>
<comment type="induction">
    <text evidence="9">In F9 cells, by retinoic acid (at protein level).</text>
</comment>
<comment type="domain">
    <text evidence="1">The SH3 domain mediates interaction with NOS3, DNM2 and WASL.</text>
</comment>
<comment type="domain">
    <text evidence="1">The F-BAR domain is necessary for membrane targeting.</text>
</comment>
<comment type="miscellaneous">
    <text>Seems to repress its own transcription.</text>
</comment>
<keyword id="KW-1003">Cell membrane</keyword>
<keyword id="KW-0175">Coiled coil</keyword>
<keyword id="KW-0963">Cytoplasm</keyword>
<keyword id="KW-0968">Cytoplasmic vesicle</keyword>
<keyword id="KW-0206">Cytoskeleton</keyword>
<keyword id="KW-0254">Endocytosis</keyword>
<keyword id="KW-0472">Membrane</keyword>
<keyword id="KW-0539">Nucleus</keyword>
<keyword id="KW-0597">Phosphoprotein</keyword>
<keyword id="KW-1185">Reference proteome</keyword>
<keyword id="KW-0728">SH3 domain</keyword>
<evidence type="ECO:0000250" key="1"/>
<evidence type="ECO:0000250" key="2">
    <source>
        <dbReference type="UniProtKB" id="Q5I0D6"/>
    </source>
</evidence>
<evidence type="ECO:0000250" key="3">
    <source>
        <dbReference type="UniProtKB" id="Q8IVI9"/>
    </source>
</evidence>
<evidence type="ECO:0000255" key="4"/>
<evidence type="ECO:0000255" key="5">
    <source>
        <dbReference type="PROSITE-ProRule" id="PRU00192"/>
    </source>
</evidence>
<evidence type="ECO:0000255" key="6">
    <source>
        <dbReference type="PROSITE-ProRule" id="PRU01077"/>
    </source>
</evidence>
<evidence type="ECO:0000255" key="7">
    <source>
        <dbReference type="PROSITE-ProRule" id="PRU01207"/>
    </source>
</evidence>
<evidence type="ECO:0000256" key="8">
    <source>
        <dbReference type="SAM" id="MobiDB-lite"/>
    </source>
</evidence>
<evidence type="ECO:0000269" key="9">
    <source>
    </source>
</evidence>
<evidence type="ECO:0000269" key="10">
    <source>
    </source>
</evidence>
<evidence type="ECO:0000305" key="11"/>
<evidence type="ECO:0000312" key="12">
    <source>
        <dbReference type="MGI" id="MGI:3606242"/>
    </source>
</evidence>
<evidence type="ECO:0007744" key="13">
    <source>
    </source>
</evidence>
<evidence type="ECO:0007744" key="14">
    <source>
    </source>
</evidence>
<evidence type="ECO:0007744" key="15">
    <source>
    </source>
</evidence>
<name>NOSTN_MOUSE</name>
<protein>
    <recommendedName>
        <fullName evidence="11">Nostrin</fullName>
    </recommendedName>
    <alternativeName>
        <fullName>Disabled homolog 2-interacting protein 2</fullName>
        <shortName>Dab2-interacting protein 2</shortName>
    </alternativeName>
    <alternativeName>
        <fullName>Nitric oxide synthase trafficker</fullName>
    </alternativeName>
    <alternativeName>
        <fullName>eNOS-trafficking inducer</fullName>
    </alternativeName>
</protein>
<sequence length="506" mass="57673">MRDPLTDCSYNKVYKSLKEFAQHGDNFCKQITSVLQQRANLEISYAKGLQKLAVRLSKALQSTKKNCLSTAWAWASESMKSAADLHQKLGKAIELEAIKPTHQVLSMQEKKRKSLDNEVEKTANLVINNWNQQIKAKKKLMMSTKKHEALFHLVESSKQSLTQKEKQKLLNKLKKSTEKLEKEDESYYQKNMAGYSTRLKWESTLENCYKSMLELEKERIQLLCNNLNQYSQHISLFGQTLTTCHTQIHCAISKVDVEKDIQALMEETAILSIENKSELLLADYFEEDPKNPMDKERRKSLLKPKLGRLQRDIEKASRDKEGLERKLKALASSSSFSDAKSQKDMETLMDENSLKLDLLQANSYKLSSVLADLEQRPKPCHPCSTCIFKWKEKEHSHTYVKISRPLLTKRLEKAESKAPAGGQNNPSSSPSGSTVSQASKHLCKALYTFQARQDDELNLEKGDIVTVHEKKEEGWWFGSLKGKRGHFPAAYVEELPPKAGNTATQA</sequence>
<proteinExistence type="evidence at protein level"/>
<accession>Q6WKZ7</accession>
<accession>Q7TSK5</accession>
<accession>Q8BWC2</accession>